<comment type="similarity">
    <text evidence="1">Belongs to the bacterial ribosomal protein bS21 family.</text>
</comment>
<comment type="sequence caution" evidence="2">
    <conflict type="erroneous initiation">
        <sequence resource="EMBL-CDS" id="ABC80493"/>
    </conflict>
</comment>
<protein>
    <recommendedName>
        <fullName evidence="1">Small ribosomal subunit protein bS21</fullName>
    </recommendedName>
    <alternativeName>
        <fullName evidence="2">30S ribosomal protein S21</fullName>
    </alternativeName>
</protein>
<evidence type="ECO:0000255" key="1">
    <source>
        <dbReference type="HAMAP-Rule" id="MF_00358"/>
    </source>
</evidence>
<evidence type="ECO:0000305" key="2"/>
<reference key="1">
    <citation type="submission" date="2006-01" db="EMBL/GenBank/DDBJ databases">
        <title>Complete sequence of Anaeromyxobacter dehalogenans 2CP-C.</title>
        <authorList>
            <person name="Copeland A."/>
            <person name="Lucas S."/>
            <person name="Lapidus A."/>
            <person name="Barry K."/>
            <person name="Detter J.C."/>
            <person name="Glavina T."/>
            <person name="Hammon N."/>
            <person name="Israni S."/>
            <person name="Pitluck S."/>
            <person name="Brettin T."/>
            <person name="Bruce D."/>
            <person name="Han C."/>
            <person name="Tapia R."/>
            <person name="Gilna P."/>
            <person name="Kiss H."/>
            <person name="Schmutz J."/>
            <person name="Larimer F."/>
            <person name="Land M."/>
            <person name="Kyrpides N."/>
            <person name="Anderson I."/>
            <person name="Sanford R.A."/>
            <person name="Ritalahti K.M."/>
            <person name="Thomas H.S."/>
            <person name="Kirby J.R."/>
            <person name="Zhulin I.B."/>
            <person name="Loeffler F.E."/>
            <person name="Richardson P."/>
        </authorList>
    </citation>
    <scope>NUCLEOTIDE SEQUENCE [LARGE SCALE GENOMIC DNA]</scope>
    <source>
        <strain>2CP-C</strain>
    </source>
</reference>
<keyword id="KW-1185">Reference proteome</keyword>
<keyword id="KW-0687">Ribonucleoprotein</keyword>
<keyword id="KW-0689">Ribosomal protein</keyword>
<accession>Q2INW0</accession>
<feature type="chain" id="PRO_0000266624" description="Small ribosomal subunit protein bS21">
    <location>
        <begin position="1"/>
        <end position="64"/>
    </location>
</feature>
<sequence>MTGVRVKDGESFENAMKRFKKQCEKAGILSEIRKREHYEKPSVKRKKKALAAKKRALKKMRKGF</sequence>
<dbReference type="EMBL" id="CP000251">
    <property type="protein sequence ID" value="ABC80493.1"/>
    <property type="status" value="ALT_INIT"/>
    <property type="molecule type" value="Genomic_DNA"/>
</dbReference>
<dbReference type="RefSeq" id="WP_012524821.1">
    <property type="nucleotide sequence ID" value="NC_007760.1"/>
</dbReference>
<dbReference type="SMR" id="Q2INW0"/>
<dbReference type="STRING" id="290397.Adeh_0718"/>
<dbReference type="KEGG" id="ade:Adeh_0718"/>
<dbReference type="eggNOG" id="COG0828">
    <property type="taxonomic scope" value="Bacteria"/>
</dbReference>
<dbReference type="HOGENOM" id="CLU_2393421_0_0_7"/>
<dbReference type="OrthoDB" id="9799244at2"/>
<dbReference type="Proteomes" id="UP000001935">
    <property type="component" value="Chromosome"/>
</dbReference>
<dbReference type="GO" id="GO:1990904">
    <property type="term" value="C:ribonucleoprotein complex"/>
    <property type="evidence" value="ECO:0007669"/>
    <property type="project" value="UniProtKB-KW"/>
</dbReference>
<dbReference type="GO" id="GO:0005840">
    <property type="term" value="C:ribosome"/>
    <property type="evidence" value="ECO:0007669"/>
    <property type="project" value="UniProtKB-KW"/>
</dbReference>
<dbReference type="GO" id="GO:0003735">
    <property type="term" value="F:structural constituent of ribosome"/>
    <property type="evidence" value="ECO:0007669"/>
    <property type="project" value="InterPro"/>
</dbReference>
<dbReference type="GO" id="GO:0006412">
    <property type="term" value="P:translation"/>
    <property type="evidence" value="ECO:0007669"/>
    <property type="project" value="UniProtKB-UniRule"/>
</dbReference>
<dbReference type="Gene3D" id="1.20.5.1150">
    <property type="entry name" value="Ribosomal protein S8"/>
    <property type="match status" value="1"/>
</dbReference>
<dbReference type="HAMAP" id="MF_00358">
    <property type="entry name" value="Ribosomal_bS21"/>
    <property type="match status" value="1"/>
</dbReference>
<dbReference type="InterPro" id="IPR001911">
    <property type="entry name" value="Ribosomal_bS21"/>
</dbReference>
<dbReference type="InterPro" id="IPR038380">
    <property type="entry name" value="Ribosomal_bS21_sf"/>
</dbReference>
<dbReference type="NCBIfam" id="TIGR00030">
    <property type="entry name" value="S21p"/>
    <property type="match status" value="1"/>
</dbReference>
<dbReference type="PANTHER" id="PTHR21109">
    <property type="entry name" value="MITOCHONDRIAL 28S RIBOSOMAL PROTEIN S21"/>
    <property type="match status" value="1"/>
</dbReference>
<dbReference type="PANTHER" id="PTHR21109:SF22">
    <property type="entry name" value="SMALL RIBOSOMAL SUBUNIT PROTEIN BS21"/>
    <property type="match status" value="1"/>
</dbReference>
<dbReference type="Pfam" id="PF01165">
    <property type="entry name" value="Ribosomal_S21"/>
    <property type="match status" value="1"/>
</dbReference>
<dbReference type="PRINTS" id="PR00976">
    <property type="entry name" value="RIBOSOMALS21"/>
</dbReference>
<organism>
    <name type="scientific">Anaeromyxobacter dehalogenans (strain 2CP-C)</name>
    <dbReference type="NCBI Taxonomy" id="290397"/>
    <lineage>
        <taxon>Bacteria</taxon>
        <taxon>Pseudomonadati</taxon>
        <taxon>Myxococcota</taxon>
        <taxon>Myxococcia</taxon>
        <taxon>Myxococcales</taxon>
        <taxon>Cystobacterineae</taxon>
        <taxon>Anaeromyxobacteraceae</taxon>
        <taxon>Anaeromyxobacter</taxon>
    </lineage>
</organism>
<name>RS21_ANADE</name>
<gene>
    <name evidence="1" type="primary">rpsU</name>
    <name type="ordered locus">Adeh_0718</name>
</gene>
<proteinExistence type="inferred from homology"/>